<reference key="1">
    <citation type="journal article" date="2008" name="Appl. Environ. Microbiol.">
        <title>The genome of Polaromonas sp. strain JS666: insights into the evolution of a hydrocarbon- and xenobiotic-degrading bacterium, and features of relevance to biotechnology.</title>
        <authorList>
            <person name="Mattes T.E."/>
            <person name="Alexander A.K."/>
            <person name="Richardson P.M."/>
            <person name="Munk A.C."/>
            <person name="Han C.S."/>
            <person name="Stothard P."/>
            <person name="Coleman N.V."/>
        </authorList>
    </citation>
    <scope>NUCLEOTIDE SEQUENCE [LARGE SCALE GENOMIC DNA]</scope>
    <source>
        <strain>JS666 / ATCC BAA-500</strain>
    </source>
</reference>
<keyword id="KW-0963">Cytoplasm</keyword>
<keyword id="KW-0251">Elongation factor</keyword>
<keyword id="KW-0342">GTP-binding</keyword>
<keyword id="KW-0547">Nucleotide-binding</keyword>
<keyword id="KW-0648">Protein biosynthesis</keyword>
<keyword id="KW-1185">Reference proteome</keyword>
<sequence length="704" mass="77871">MTRKTPIERYRNIGISAHIDAGKTTTTERILFYTGVNYKLGEVHEGTATMDWMEQEQERGITITSAATTAFWKGMAGNYPEHRINIIDTPGHVDFTIEVERSMRVLDGAVMVYDSVGGVQPQSETVWRQANKYKVPRIAFVNKMDRVGADFFRVQRQIGERMKGVAVPVQIPIGAEDHFQGVVDLVKMKAIVWDDISQGLHFEYRDIPDELLATARTWRDKMIEAAAEASEPLLEKYLAGEALSEDEIRQGIRQRTVANEIVPMLCGSAFKNKGVQALLDAIIDYLPSPVDVPAILGHTEDDKTAERHPGDNEPFSALAFKVMTDPFVGQLIFFRVYSGVVKTGDTVYIPGKTRKERLGRLLQMHANVRQEIKEVHAGDIAAAVGLKDVTTGDTLCDPDKVIMLERMVFPEPVISQAVEPKTQADQEKMGVALHRLAQEDPSFRVQTDEESGQTIISGMGELHLEILVDRMKREFGVDATVGKPQVAYRETIKQAVKDVEGKFIKQSGGRGQYGHAVLNVEPQPPGKGYEFVDAIKGGVVPREYIPAVDKGIQDALTAGVLASYPVVDVKATLVFGSSHDVDSNENAFRMAGAIAFREALRRARPILLEPMMAVEVEMPEDFMGHVMGDLSTRRGMIQGMEDIAGGGGKLVRAEVPLSEMFGYSTTLRSLTQGRATYTMEFKHYTEAPADVSEAIIRGKGMGRQ</sequence>
<comment type="function">
    <text evidence="1">Catalyzes the GTP-dependent ribosomal translocation step during translation elongation. During this step, the ribosome changes from the pre-translocational (PRE) to the post-translocational (POST) state as the newly formed A-site-bound peptidyl-tRNA and P-site-bound deacylated tRNA move to the P and E sites, respectively. Catalyzes the coordinated movement of the two tRNA molecules, the mRNA and conformational changes in the ribosome.</text>
</comment>
<comment type="subcellular location">
    <subcellularLocation>
        <location evidence="1">Cytoplasm</location>
    </subcellularLocation>
</comment>
<comment type="similarity">
    <text evidence="1">Belongs to the TRAFAC class translation factor GTPase superfamily. Classic translation factor GTPase family. EF-G/EF-2 subfamily.</text>
</comment>
<dbReference type="EMBL" id="CP000316">
    <property type="protein sequence ID" value="ABE46179.1"/>
    <property type="molecule type" value="Genomic_DNA"/>
</dbReference>
<dbReference type="RefSeq" id="WP_011485168.1">
    <property type="nucleotide sequence ID" value="NC_007948.1"/>
</dbReference>
<dbReference type="SMR" id="Q123W3"/>
<dbReference type="STRING" id="296591.Bpro_4287"/>
<dbReference type="KEGG" id="pol:Bpro_4287"/>
<dbReference type="eggNOG" id="COG0480">
    <property type="taxonomic scope" value="Bacteria"/>
</dbReference>
<dbReference type="HOGENOM" id="CLU_002794_4_1_4"/>
<dbReference type="OrthoDB" id="9804431at2"/>
<dbReference type="Proteomes" id="UP000001983">
    <property type="component" value="Chromosome"/>
</dbReference>
<dbReference type="GO" id="GO:0005737">
    <property type="term" value="C:cytoplasm"/>
    <property type="evidence" value="ECO:0007669"/>
    <property type="project" value="UniProtKB-SubCell"/>
</dbReference>
<dbReference type="GO" id="GO:0005525">
    <property type="term" value="F:GTP binding"/>
    <property type="evidence" value="ECO:0007669"/>
    <property type="project" value="UniProtKB-UniRule"/>
</dbReference>
<dbReference type="GO" id="GO:0003924">
    <property type="term" value="F:GTPase activity"/>
    <property type="evidence" value="ECO:0007669"/>
    <property type="project" value="InterPro"/>
</dbReference>
<dbReference type="GO" id="GO:0097216">
    <property type="term" value="F:guanosine tetraphosphate binding"/>
    <property type="evidence" value="ECO:0007669"/>
    <property type="project" value="UniProtKB-ARBA"/>
</dbReference>
<dbReference type="GO" id="GO:0003746">
    <property type="term" value="F:translation elongation factor activity"/>
    <property type="evidence" value="ECO:0007669"/>
    <property type="project" value="UniProtKB-UniRule"/>
</dbReference>
<dbReference type="GO" id="GO:0032790">
    <property type="term" value="P:ribosome disassembly"/>
    <property type="evidence" value="ECO:0007669"/>
    <property type="project" value="TreeGrafter"/>
</dbReference>
<dbReference type="CDD" id="cd01886">
    <property type="entry name" value="EF-G"/>
    <property type="match status" value="1"/>
</dbReference>
<dbReference type="CDD" id="cd16262">
    <property type="entry name" value="EFG_III"/>
    <property type="match status" value="1"/>
</dbReference>
<dbReference type="CDD" id="cd01434">
    <property type="entry name" value="EFG_mtEFG1_IV"/>
    <property type="match status" value="1"/>
</dbReference>
<dbReference type="CDD" id="cd03713">
    <property type="entry name" value="EFG_mtEFG_C"/>
    <property type="match status" value="1"/>
</dbReference>
<dbReference type="CDD" id="cd04088">
    <property type="entry name" value="EFG_mtEFG_II"/>
    <property type="match status" value="1"/>
</dbReference>
<dbReference type="FunFam" id="2.40.30.10:FF:000006">
    <property type="entry name" value="Elongation factor G"/>
    <property type="match status" value="1"/>
</dbReference>
<dbReference type="FunFam" id="3.30.230.10:FF:000003">
    <property type="entry name" value="Elongation factor G"/>
    <property type="match status" value="1"/>
</dbReference>
<dbReference type="FunFam" id="3.30.70.240:FF:000001">
    <property type="entry name" value="Elongation factor G"/>
    <property type="match status" value="1"/>
</dbReference>
<dbReference type="FunFam" id="3.30.70.870:FF:000001">
    <property type="entry name" value="Elongation factor G"/>
    <property type="match status" value="1"/>
</dbReference>
<dbReference type="FunFam" id="3.40.50.300:FF:000029">
    <property type="entry name" value="Elongation factor G"/>
    <property type="match status" value="1"/>
</dbReference>
<dbReference type="Gene3D" id="3.30.230.10">
    <property type="match status" value="1"/>
</dbReference>
<dbReference type="Gene3D" id="3.30.70.240">
    <property type="match status" value="1"/>
</dbReference>
<dbReference type="Gene3D" id="3.30.70.870">
    <property type="entry name" value="Elongation Factor G (Translational Gtpase), domain 3"/>
    <property type="match status" value="1"/>
</dbReference>
<dbReference type="Gene3D" id="3.40.50.300">
    <property type="entry name" value="P-loop containing nucleotide triphosphate hydrolases"/>
    <property type="match status" value="1"/>
</dbReference>
<dbReference type="Gene3D" id="2.40.30.10">
    <property type="entry name" value="Translation factors"/>
    <property type="match status" value="1"/>
</dbReference>
<dbReference type="HAMAP" id="MF_00054_B">
    <property type="entry name" value="EF_G_EF_2_B"/>
    <property type="match status" value="1"/>
</dbReference>
<dbReference type="InterPro" id="IPR041095">
    <property type="entry name" value="EFG_II"/>
</dbReference>
<dbReference type="InterPro" id="IPR009022">
    <property type="entry name" value="EFG_III"/>
</dbReference>
<dbReference type="InterPro" id="IPR035647">
    <property type="entry name" value="EFG_III/V"/>
</dbReference>
<dbReference type="InterPro" id="IPR047872">
    <property type="entry name" value="EFG_IV"/>
</dbReference>
<dbReference type="InterPro" id="IPR035649">
    <property type="entry name" value="EFG_V"/>
</dbReference>
<dbReference type="InterPro" id="IPR000640">
    <property type="entry name" value="EFG_V-like"/>
</dbReference>
<dbReference type="InterPro" id="IPR004161">
    <property type="entry name" value="EFTu-like_2"/>
</dbReference>
<dbReference type="InterPro" id="IPR031157">
    <property type="entry name" value="G_TR_CS"/>
</dbReference>
<dbReference type="InterPro" id="IPR027417">
    <property type="entry name" value="P-loop_NTPase"/>
</dbReference>
<dbReference type="InterPro" id="IPR020568">
    <property type="entry name" value="Ribosomal_Su5_D2-typ_SF"/>
</dbReference>
<dbReference type="InterPro" id="IPR014721">
    <property type="entry name" value="Ribsml_uS5_D2-typ_fold_subgr"/>
</dbReference>
<dbReference type="InterPro" id="IPR005225">
    <property type="entry name" value="Small_GTP-bd"/>
</dbReference>
<dbReference type="InterPro" id="IPR000795">
    <property type="entry name" value="T_Tr_GTP-bd_dom"/>
</dbReference>
<dbReference type="InterPro" id="IPR009000">
    <property type="entry name" value="Transl_B-barrel_sf"/>
</dbReference>
<dbReference type="InterPro" id="IPR004540">
    <property type="entry name" value="Transl_elong_EFG/EF2"/>
</dbReference>
<dbReference type="InterPro" id="IPR005517">
    <property type="entry name" value="Transl_elong_EFG/EF2_IV"/>
</dbReference>
<dbReference type="NCBIfam" id="TIGR00484">
    <property type="entry name" value="EF-G"/>
    <property type="match status" value="1"/>
</dbReference>
<dbReference type="NCBIfam" id="NF009381">
    <property type="entry name" value="PRK12740.1-5"/>
    <property type="match status" value="1"/>
</dbReference>
<dbReference type="NCBIfam" id="TIGR00231">
    <property type="entry name" value="small_GTP"/>
    <property type="match status" value="1"/>
</dbReference>
<dbReference type="PANTHER" id="PTHR43261:SF1">
    <property type="entry name" value="RIBOSOME-RELEASING FACTOR 2, MITOCHONDRIAL"/>
    <property type="match status" value="1"/>
</dbReference>
<dbReference type="PANTHER" id="PTHR43261">
    <property type="entry name" value="TRANSLATION ELONGATION FACTOR G-RELATED"/>
    <property type="match status" value="1"/>
</dbReference>
<dbReference type="Pfam" id="PF00679">
    <property type="entry name" value="EFG_C"/>
    <property type="match status" value="1"/>
</dbReference>
<dbReference type="Pfam" id="PF14492">
    <property type="entry name" value="EFG_III"/>
    <property type="match status" value="1"/>
</dbReference>
<dbReference type="Pfam" id="PF03764">
    <property type="entry name" value="EFG_IV"/>
    <property type="match status" value="1"/>
</dbReference>
<dbReference type="Pfam" id="PF00009">
    <property type="entry name" value="GTP_EFTU"/>
    <property type="match status" value="1"/>
</dbReference>
<dbReference type="Pfam" id="PF03144">
    <property type="entry name" value="GTP_EFTU_D2"/>
    <property type="match status" value="1"/>
</dbReference>
<dbReference type="PRINTS" id="PR00315">
    <property type="entry name" value="ELONGATNFCT"/>
</dbReference>
<dbReference type="SMART" id="SM00838">
    <property type="entry name" value="EFG_C"/>
    <property type="match status" value="1"/>
</dbReference>
<dbReference type="SMART" id="SM00889">
    <property type="entry name" value="EFG_IV"/>
    <property type="match status" value="1"/>
</dbReference>
<dbReference type="SUPFAM" id="SSF54980">
    <property type="entry name" value="EF-G C-terminal domain-like"/>
    <property type="match status" value="2"/>
</dbReference>
<dbReference type="SUPFAM" id="SSF52540">
    <property type="entry name" value="P-loop containing nucleoside triphosphate hydrolases"/>
    <property type="match status" value="1"/>
</dbReference>
<dbReference type="SUPFAM" id="SSF54211">
    <property type="entry name" value="Ribosomal protein S5 domain 2-like"/>
    <property type="match status" value="1"/>
</dbReference>
<dbReference type="SUPFAM" id="SSF50447">
    <property type="entry name" value="Translation proteins"/>
    <property type="match status" value="1"/>
</dbReference>
<dbReference type="PROSITE" id="PS00301">
    <property type="entry name" value="G_TR_1"/>
    <property type="match status" value="1"/>
</dbReference>
<dbReference type="PROSITE" id="PS51722">
    <property type="entry name" value="G_TR_2"/>
    <property type="match status" value="1"/>
</dbReference>
<organism>
    <name type="scientific">Polaromonas sp. (strain JS666 / ATCC BAA-500)</name>
    <dbReference type="NCBI Taxonomy" id="296591"/>
    <lineage>
        <taxon>Bacteria</taxon>
        <taxon>Pseudomonadati</taxon>
        <taxon>Pseudomonadota</taxon>
        <taxon>Betaproteobacteria</taxon>
        <taxon>Burkholderiales</taxon>
        <taxon>Comamonadaceae</taxon>
        <taxon>Polaromonas</taxon>
    </lineage>
</organism>
<evidence type="ECO:0000255" key="1">
    <source>
        <dbReference type="HAMAP-Rule" id="MF_00054"/>
    </source>
</evidence>
<name>EFG2_POLSJ</name>
<gene>
    <name evidence="1" type="primary">fusA2</name>
    <name type="ordered locus">Bpro_4287</name>
</gene>
<accession>Q123W3</accession>
<feature type="chain" id="PRO_0000263482" description="Elongation factor G 2">
    <location>
        <begin position="1"/>
        <end position="704"/>
    </location>
</feature>
<feature type="domain" description="tr-type G">
    <location>
        <begin position="8"/>
        <end position="290"/>
    </location>
</feature>
<feature type="binding site" evidence="1">
    <location>
        <begin position="17"/>
        <end position="24"/>
    </location>
    <ligand>
        <name>GTP</name>
        <dbReference type="ChEBI" id="CHEBI:37565"/>
    </ligand>
</feature>
<feature type="binding site" evidence="1">
    <location>
        <begin position="88"/>
        <end position="92"/>
    </location>
    <ligand>
        <name>GTP</name>
        <dbReference type="ChEBI" id="CHEBI:37565"/>
    </ligand>
</feature>
<feature type="binding site" evidence="1">
    <location>
        <begin position="142"/>
        <end position="145"/>
    </location>
    <ligand>
        <name>GTP</name>
        <dbReference type="ChEBI" id="CHEBI:37565"/>
    </ligand>
</feature>
<protein>
    <recommendedName>
        <fullName evidence="1">Elongation factor G 2</fullName>
        <shortName evidence="1">EF-G 2</shortName>
    </recommendedName>
</protein>
<proteinExistence type="inferred from homology"/>